<keyword id="KW-0963">Cytoplasm</keyword>
<keyword id="KW-0378">Hydrolase</keyword>
<keyword id="KW-0540">Nuclease</keyword>
<keyword id="KW-0690">Ribosome biogenesis</keyword>
<reference key="1">
    <citation type="submission" date="2008-10" db="EMBL/GenBank/DDBJ databases">
        <title>The complete genome sequence of Helicobacter pylori strain P12.</title>
        <authorList>
            <person name="Fischer W."/>
            <person name="Windhager L."/>
            <person name="Karnholz A."/>
            <person name="Zeiller M."/>
            <person name="Zimmer R."/>
            <person name="Haas R."/>
        </authorList>
    </citation>
    <scope>NUCLEOTIDE SEQUENCE [LARGE SCALE GENOMIC DNA]</scope>
    <source>
        <strain>P12</strain>
    </source>
</reference>
<feature type="chain" id="PRO_1000131038" description="Putative pre-16S rRNA nuclease">
    <location>
        <begin position="1"/>
        <end position="134"/>
    </location>
</feature>
<name>YQGF_HELP2</name>
<proteinExistence type="inferred from homology"/>
<protein>
    <recommendedName>
        <fullName evidence="1">Putative pre-16S rRNA nuclease</fullName>
        <ecNumber evidence="1">3.1.-.-</ecNumber>
    </recommendedName>
</protein>
<sequence length="134" mass="15179">MILACDVGLKRIGIAALLNGVVLPLEAILRHNRNQASRDLSDLLREKNIQVLVVGKPNESYADTNVRIEHFIKLVDFTGEIVFINEDNSSIEAYDNLEHLGRKNKRLATKDGRLDSLSACRILERYCQQVLKNH</sequence>
<accession>B6JKR0</accession>
<evidence type="ECO:0000255" key="1">
    <source>
        <dbReference type="HAMAP-Rule" id="MF_00651"/>
    </source>
</evidence>
<gene>
    <name type="ordered locus">HPP12_0331</name>
</gene>
<organism>
    <name type="scientific">Helicobacter pylori (strain P12)</name>
    <dbReference type="NCBI Taxonomy" id="570508"/>
    <lineage>
        <taxon>Bacteria</taxon>
        <taxon>Pseudomonadati</taxon>
        <taxon>Campylobacterota</taxon>
        <taxon>Epsilonproteobacteria</taxon>
        <taxon>Campylobacterales</taxon>
        <taxon>Helicobacteraceae</taxon>
        <taxon>Helicobacter</taxon>
    </lineage>
</organism>
<comment type="function">
    <text evidence="1">Could be a nuclease involved in processing of the 5'-end of pre-16S rRNA.</text>
</comment>
<comment type="subcellular location">
    <subcellularLocation>
        <location evidence="1">Cytoplasm</location>
    </subcellularLocation>
</comment>
<comment type="similarity">
    <text evidence="1">Belongs to the YqgF nuclease family.</text>
</comment>
<dbReference type="EC" id="3.1.-.-" evidence="1"/>
<dbReference type="EMBL" id="CP001217">
    <property type="protein sequence ID" value="ACJ07488.1"/>
    <property type="molecule type" value="Genomic_DNA"/>
</dbReference>
<dbReference type="SMR" id="B6JKR0"/>
<dbReference type="KEGG" id="hpp:HPP12_0331"/>
<dbReference type="HOGENOM" id="CLU_098240_2_2_7"/>
<dbReference type="Proteomes" id="UP000008198">
    <property type="component" value="Chromosome"/>
</dbReference>
<dbReference type="GO" id="GO:0005829">
    <property type="term" value="C:cytosol"/>
    <property type="evidence" value="ECO:0007669"/>
    <property type="project" value="TreeGrafter"/>
</dbReference>
<dbReference type="GO" id="GO:0004518">
    <property type="term" value="F:nuclease activity"/>
    <property type="evidence" value="ECO:0007669"/>
    <property type="project" value="UniProtKB-KW"/>
</dbReference>
<dbReference type="GO" id="GO:0000967">
    <property type="term" value="P:rRNA 5'-end processing"/>
    <property type="evidence" value="ECO:0007669"/>
    <property type="project" value="UniProtKB-UniRule"/>
</dbReference>
<dbReference type="CDD" id="cd16964">
    <property type="entry name" value="YqgF"/>
    <property type="match status" value="1"/>
</dbReference>
<dbReference type="FunFam" id="3.30.420.140:FF:000013">
    <property type="entry name" value="Putative pre-16S rRNA nuclease"/>
    <property type="match status" value="1"/>
</dbReference>
<dbReference type="Gene3D" id="3.30.420.140">
    <property type="entry name" value="YqgF/RNase H-like domain"/>
    <property type="match status" value="1"/>
</dbReference>
<dbReference type="HAMAP" id="MF_00651">
    <property type="entry name" value="Nuclease_YqgF"/>
    <property type="match status" value="1"/>
</dbReference>
<dbReference type="InterPro" id="IPR012337">
    <property type="entry name" value="RNaseH-like_sf"/>
</dbReference>
<dbReference type="InterPro" id="IPR005227">
    <property type="entry name" value="YqgF"/>
</dbReference>
<dbReference type="InterPro" id="IPR006641">
    <property type="entry name" value="YqgF/RNaseH-like_dom"/>
</dbReference>
<dbReference type="InterPro" id="IPR037027">
    <property type="entry name" value="YqgF/RNaseH-like_dom_sf"/>
</dbReference>
<dbReference type="NCBIfam" id="NF001026">
    <property type="entry name" value="PRK00109.2-2"/>
    <property type="match status" value="1"/>
</dbReference>
<dbReference type="PANTHER" id="PTHR33317">
    <property type="entry name" value="POLYNUCLEOTIDYL TRANSFERASE, RIBONUCLEASE H-LIKE SUPERFAMILY PROTEIN"/>
    <property type="match status" value="1"/>
</dbReference>
<dbReference type="PANTHER" id="PTHR33317:SF4">
    <property type="entry name" value="POLYNUCLEOTIDYL TRANSFERASE, RIBONUCLEASE H-LIKE SUPERFAMILY PROTEIN"/>
    <property type="match status" value="1"/>
</dbReference>
<dbReference type="Pfam" id="PF03652">
    <property type="entry name" value="RuvX"/>
    <property type="match status" value="1"/>
</dbReference>
<dbReference type="SMART" id="SM00732">
    <property type="entry name" value="YqgFc"/>
    <property type="match status" value="1"/>
</dbReference>
<dbReference type="SUPFAM" id="SSF53098">
    <property type="entry name" value="Ribonuclease H-like"/>
    <property type="match status" value="1"/>
</dbReference>